<evidence type="ECO:0000255" key="1">
    <source>
        <dbReference type="PROSITE-ProRule" id="PRU00303"/>
    </source>
</evidence>
<sequence>MKKIMLFLAMTSILSACQPNYTGKYIEIGDTLTDYTKECFKENEIPYKYEKGKLYIPEDAFDTAIYTCS</sequence>
<comment type="subcellular location">
    <subcellularLocation>
        <location evidence="1">Cell membrane</location>
        <topology evidence="1">Lipid-anchor</topology>
    </subcellularLocation>
</comment>
<proteinExistence type="inferred from homology"/>
<dbReference type="EMBL" id="AL009126">
    <property type="protein sequence ID" value="CAX52696.1"/>
    <property type="molecule type" value="Genomic_DNA"/>
</dbReference>
<dbReference type="RefSeq" id="WP_003243327.1">
    <property type="nucleotide sequence ID" value="NZ_OZ025638.1"/>
</dbReference>
<dbReference type="RefSeq" id="YP_003097790.1">
    <property type="nucleotide sequence ID" value="NC_000964.3"/>
</dbReference>
<dbReference type="STRING" id="224308.BSU34729"/>
<dbReference type="PaxDb" id="224308-BSU34729"/>
<dbReference type="EnsemblBacteria" id="CAX52696">
    <property type="protein sequence ID" value="CAX52696"/>
    <property type="gene ID" value="BSU_34729"/>
</dbReference>
<dbReference type="GeneID" id="8303070"/>
<dbReference type="KEGG" id="bsu:BSU34729"/>
<dbReference type="PATRIC" id="fig|224308.179.peg.3760"/>
<dbReference type="eggNOG" id="ENOG5030DF6">
    <property type="taxonomic scope" value="Bacteria"/>
</dbReference>
<dbReference type="InParanoid" id="C0H3R7"/>
<dbReference type="OrthoDB" id="2357160at2"/>
<dbReference type="BioCyc" id="BSUB:BSU34729-MONOMER"/>
<dbReference type="Proteomes" id="UP000001570">
    <property type="component" value="Chromosome"/>
</dbReference>
<dbReference type="GO" id="GO:0005886">
    <property type="term" value="C:plasma membrane"/>
    <property type="evidence" value="ECO:0007669"/>
    <property type="project" value="UniProtKB-SubCell"/>
</dbReference>
<dbReference type="PROSITE" id="PS51257">
    <property type="entry name" value="PROKAR_LIPOPROTEIN"/>
    <property type="match status" value="1"/>
</dbReference>
<feature type="signal peptide" evidence="1">
    <location>
        <begin position="1"/>
        <end position="16"/>
    </location>
</feature>
<feature type="chain" id="PRO_0000380088" description="Uncharacterized lipoprotein YvzJ">
    <location>
        <begin position="17"/>
        <end position="69"/>
    </location>
</feature>
<feature type="lipid moiety-binding region" description="N-palmitoyl cysteine" evidence="1">
    <location>
        <position position="17"/>
    </location>
</feature>
<feature type="lipid moiety-binding region" description="S-diacylglycerol cysteine" evidence="1">
    <location>
        <position position="17"/>
    </location>
</feature>
<gene>
    <name type="primary">yvzJ</name>
    <name type="ordered locus">BSU34729</name>
</gene>
<protein>
    <recommendedName>
        <fullName>Uncharacterized lipoprotein YvzJ</fullName>
    </recommendedName>
</protein>
<reference key="1">
    <citation type="journal article" date="1997" name="Nature">
        <title>The complete genome sequence of the Gram-positive bacterium Bacillus subtilis.</title>
        <authorList>
            <person name="Kunst F."/>
            <person name="Ogasawara N."/>
            <person name="Moszer I."/>
            <person name="Albertini A.M."/>
            <person name="Alloni G."/>
            <person name="Azevedo V."/>
            <person name="Bertero M.G."/>
            <person name="Bessieres P."/>
            <person name="Bolotin A."/>
            <person name="Borchert S."/>
            <person name="Borriss R."/>
            <person name="Boursier L."/>
            <person name="Brans A."/>
            <person name="Braun M."/>
            <person name="Brignell S.C."/>
            <person name="Bron S."/>
            <person name="Brouillet S."/>
            <person name="Bruschi C.V."/>
            <person name="Caldwell B."/>
            <person name="Capuano V."/>
            <person name="Carter N.M."/>
            <person name="Choi S.-K."/>
            <person name="Codani J.-J."/>
            <person name="Connerton I.F."/>
            <person name="Cummings N.J."/>
            <person name="Daniel R.A."/>
            <person name="Denizot F."/>
            <person name="Devine K.M."/>
            <person name="Duesterhoeft A."/>
            <person name="Ehrlich S.D."/>
            <person name="Emmerson P.T."/>
            <person name="Entian K.-D."/>
            <person name="Errington J."/>
            <person name="Fabret C."/>
            <person name="Ferrari E."/>
            <person name="Foulger D."/>
            <person name="Fritz C."/>
            <person name="Fujita M."/>
            <person name="Fujita Y."/>
            <person name="Fuma S."/>
            <person name="Galizzi A."/>
            <person name="Galleron N."/>
            <person name="Ghim S.-Y."/>
            <person name="Glaser P."/>
            <person name="Goffeau A."/>
            <person name="Golightly E.J."/>
            <person name="Grandi G."/>
            <person name="Guiseppi G."/>
            <person name="Guy B.J."/>
            <person name="Haga K."/>
            <person name="Haiech J."/>
            <person name="Harwood C.R."/>
            <person name="Henaut A."/>
            <person name="Hilbert H."/>
            <person name="Holsappel S."/>
            <person name="Hosono S."/>
            <person name="Hullo M.-F."/>
            <person name="Itaya M."/>
            <person name="Jones L.-M."/>
            <person name="Joris B."/>
            <person name="Karamata D."/>
            <person name="Kasahara Y."/>
            <person name="Klaerr-Blanchard M."/>
            <person name="Klein C."/>
            <person name="Kobayashi Y."/>
            <person name="Koetter P."/>
            <person name="Koningstein G."/>
            <person name="Krogh S."/>
            <person name="Kumano M."/>
            <person name="Kurita K."/>
            <person name="Lapidus A."/>
            <person name="Lardinois S."/>
            <person name="Lauber J."/>
            <person name="Lazarevic V."/>
            <person name="Lee S.-M."/>
            <person name="Levine A."/>
            <person name="Liu H."/>
            <person name="Masuda S."/>
            <person name="Mauel C."/>
            <person name="Medigue C."/>
            <person name="Medina N."/>
            <person name="Mellado R.P."/>
            <person name="Mizuno M."/>
            <person name="Moestl D."/>
            <person name="Nakai S."/>
            <person name="Noback M."/>
            <person name="Noone D."/>
            <person name="O'Reilly M."/>
            <person name="Ogawa K."/>
            <person name="Ogiwara A."/>
            <person name="Oudega B."/>
            <person name="Park S.-H."/>
            <person name="Parro V."/>
            <person name="Pohl T.M."/>
            <person name="Portetelle D."/>
            <person name="Porwollik S."/>
            <person name="Prescott A.M."/>
            <person name="Presecan E."/>
            <person name="Pujic P."/>
            <person name="Purnelle B."/>
            <person name="Rapoport G."/>
            <person name="Rey M."/>
            <person name="Reynolds S."/>
            <person name="Rieger M."/>
            <person name="Rivolta C."/>
            <person name="Rocha E."/>
            <person name="Roche B."/>
            <person name="Rose M."/>
            <person name="Sadaie Y."/>
            <person name="Sato T."/>
            <person name="Scanlan E."/>
            <person name="Schleich S."/>
            <person name="Schroeter R."/>
            <person name="Scoffone F."/>
            <person name="Sekiguchi J."/>
            <person name="Sekowska A."/>
            <person name="Seror S.J."/>
            <person name="Serror P."/>
            <person name="Shin B.-S."/>
            <person name="Soldo B."/>
            <person name="Sorokin A."/>
            <person name="Tacconi E."/>
            <person name="Takagi T."/>
            <person name="Takahashi H."/>
            <person name="Takemaru K."/>
            <person name="Takeuchi M."/>
            <person name="Tamakoshi A."/>
            <person name="Tanaka T."/>
            <person name="Terpstra P."/>
            <person name="Tognoni A."/>
            <person name="Tosato V."/>
            <person name="Uchiyama S."/>
            <person name="Vandenbol M."/>
            <person name="Vannier F."/>
            <person name="Vassarotti A."/>
            <person name="Viari A."/>
            <person name="Wambutt R."/>
            <person name="Wedler E."/>
            <person name="Wedler H."/>
            <person name="Weitzenegger T."/>
            <person name="Winters P."/>
            <person name="Wipat A."/>
            <person name="Yamamoto H."/>
            <person name="Yamane K."/>
            <person name="Yasumoto K."/>
            <person name="Yata K."/>
            <person name="Yoshida K."/>
            <person name="Yoshikawa H.-F."/>
            <person name="Zumstein E."/>
            <person name="Yoshikawa H."/>
            <person name="Danchin A."/>
        </authorList>
    </citation>
    <scope>NUCLEOTIDE SEQUENCE [LARGE SCALE GENOMIC DNA]</scope>
    <source>
        <strain>168</strain>
    </source>
</reference>
<accession>C0H3R7</accession>
<organism>
    <name type="scientific">Bacillus subtilis (strain 168)</name>
    <dbReference type="NCBI Taxonomy" id="224308"/>
    <lineage>
        <taxon>Bacteria</taxon>
        <taxon>Bacillati</taxon>
        <taxon>Bacillota</taxon>
        <taxon>Bacilli</taxon>
        <taxon>Bacillales</taxon>
        <taxon>Bacillaceae</taxon>
        <taxon>Bacillus</taxon>
    </lineage>
</organism>
<name>YVZJ_BACSU</name>
<keyword id="KW-1003">Cell membrane</keyword>
<keyword id="KW-0449">Lipoprotein</keyword>
<keyword id="KW-0472">Membrane</keyword>
<keyword id="KW-0564">Palmitate</keyword>
<keyword id="KW-1185">Reference proteome</keyword>
<keyword id="KW-0732">Signal</keyword>